<accession>B1IRT2</accession>
<dbReference type="EMBL" id="CP000946">
    <property type="protein sequence ID" value="ACA77770.1"/>
    <property type="molecule type" value="Genomic_DNA"/>
</dbReference>
<dbReference type="SMR" id="B1IRT2"/>
<dbReference type="KEGG" id="ecl:EcolC_2130"/>
<dbReference type="HOGENOM" id="CLU_001265_61_1_6"/>
<dbReference type="GO" id="GO:0005886">
    <property type="term" value="C:plasma membrane"/>
    <property type="evidence" value="ECO:0007669"/>
    <property type="project" value="UniProtKB-SubCell"/>
</dbReference>
<dbReference type="GO" id="GO:0015144">
    <property type="term" value="F:carbohydrate transmembrane transporter activity"/>
    <property type="evidence" value="ECO:0007669"/>
    <property type="project" value="UniProtKB-UniRule"/>
</dbReference>
<dbReference type="CDD" id="cd17324">
    <property type="entry name" value="MFS_NepI_like"/>
    <property type="match status" value="1"/>
</dbReference>
<dbReference type="FunFam" id="1.20.1250.20:FF:000079">
    <property type="entry name" value="Probable sugar efflux transporter"/>
    <property type="match status" value="1"/>
</dbReference>
<dbReference type="Gene3D" id="1.20.1250.20">
    <property type="entry name" value="MFS general substrate transporter like domains"/>
    <property type="match status" value="1"/>
</dbReference>
<dbReference type="HAMAP" id="MF_00517">
    <property type="entry name" value="MFS_SotB"/>
    <property type="match status" value="1"/>
</dbReference>
<dbReference type="InterPro" id="IPR011701">
    <property type="entry name" value="MFS"/>
</dbReference>
<dbReference type="InterPro" id="IPR020846">
    <property type="entry name" value="MFS_dom"/>
</dbReference>
<dbReference type="InterPro" id="IPR050189">
    <property type="entry name" value="MFS_Efflux_Transporters"/>
</dbReference>
<dbReference type="InterPro" id="IPR036259">
    <property type="entry name" value="MFS_trans_sf"/>
</dbReference>
<dbReference type="InterPro" id="IPR023495">
    <property type="entry name" value="Sugar_effux_transptr_put"/>
</dbReference>
<dbReference type="NCBIfam" id="NF002921">
    <property type="entry name" value="PRK03545.1"/>
    <property type="match status" value="1"/>
</dbReference>
<dbReference type="PANTHER" id="PTHR43124">
    <property type="entry name" value="PURINE EFFLUX PUMP PBUE"/>
    <property type="match status" value="1"/>
</dbReference>
<dbReference type="PANTHER" id="PTHR43124:SF4">
    <property type="entry name" value="SUGAR EFFLUX TRANSPORTER"/>
    <property type="match status" value="1"/>
</dbReference>
<dbReference type="Pfam" id="PF07690">
    <property type="entry name" value="MFS_1"/>
    <property type="match status" value="1"/>
</dbReference>
<dbReference type="SUPFAM" id="SSF103473">
    <property type="entry name" value="MFS general substrate transporter"/>
    <property type="match status" value="1"/>
</dbReference>
<dbReference type="PROSITE" id="PS50850">
    <property type="entry name" value="MFS"/>
    <property type="match status" value="1"/>
</dbReference>
<reference key="1">
    <citation type="submission" date="2008-02" db="EMBL/GenBank/DDBJ databases">
        <title>Complete sequence of Escherichia coli C str. ATCC 8739.</title>
        <authorList>
            <person name="Copeland A."/>
            <person name="Lucas S."/>
            <person name="Lapidus A."/>
            <person name="Glavina del Rio T."/>
            <person name="Dalin E."/>
            <person name="Tice H."/>
            <person name="Bruce D."/>
            <person name="Goodwin L."/>
            <person name="Pitluck S."/>
            <person name="Kiss H."/>
            <person name="Brettin T."/>
            <person name="Detter J.C."/>
            <person name="Han C."/>
            <person name="Kuske C.R."/>
            <person name="Schmutz J."/>
            <person name="Larimer F."/>
            <person name="Land M."/>
            <person name="Hauser L."/>
            <person name="Kyrpides N."/>
            <person name="Mikhailova N."/>
            <person name="Ingram L."/>
            <person name="Richardson P."/>
        </authorList>
    </citation>
    <scope>NUCLEOTIDE SEQUENCE [LARGE SCALE GENOMIC DNA]</scope>
    <source>
        <strain>ATCC 8739 / DSM 1576 / NBRC 3972 / NCIMB 8545 / WDCM 00012 / Crooks</strain>
    </source>
</reference>
<gene>
    <name evidence="1" type="primary">sotB</name>
    <name type="ordered locus">EcolC_2130</name>
</gene>
<evidence type="ECO:0000255" key="1">
    <source>
        <dbReference type="HAMAP-Rule" id="MF_00517"/>
    </source>
</evidence>
<keyword id="KW-0997">Cell inner membrane</keyword>
<keyword id="KW-1003">Cell membrane</keyword>
<keyword id="KW-0472">Membrane</keyword>
<keyword id="KW-0762">Sugar transport</keyword>
<keyword id="KW-0812">Transmembrane</keyword>
<keyword id="KW-1133">Transmembrane helix</keyword>
<keyword id="KW-0813">Transport</keyword>
<name>SOTB_ECOLC</name>
<comment type="function">
    <text evidence="1">Involved in the efflux of sugars. The physiological role may be the reduction of the intracellular concentration of toxic sugars or sugar metabolites.</text>
</comment>
<comment type="subcellular location">
    <subcellularLocation>
        <location evidence="1">Cell inner membrane</location>
        <topology evidence="1">Multi-pass membrane protein</topology>
    </subcellularLocation>
</comment>
<comment type="similarity">
    <text evidence="1">Belongs to the major facilitator superfamily. SotB (TC 2.A.1.2) family.</text>
</comment>
<protein>
    <recommendedName>
        <fullName evidence="1">Probable sugar efflux transporter</fullName>
    </recommendedName>
</protein>
<sequence length="396" mass="42538">MTTNTVSRKVAWLRVVTLAVAAFIFNTTEFVPVGLLSDIAQSFHMQTAQVGIMLTIYAWVVALMSLPFMLMTSQVERRKLLICLFVVFIASHVLSFLSWSFTVLVISRIGVAFAHAIFWSITASLAIRMAPAGKRAQALSLIATGTALAMVLGLPLGRIVGQYFGWRMTFFAIGIGALITLLCLIKLLPLLPSEHSGSLKSLPLLFRRPALMSIYLLTVVVVTAHYTAYSYIEPFVQNIAGFSANFATALLLLLGGAGIIGSVIFGKLGNQYASALVSTAIALLLVCLALLLPAANSEIHLGVLSIFWGIAMMIIGLGMQVKVLALAPDATDVAMALFSGIFNIGIGAGALVGNQVSLHWSMSMIGYVGAVPAFAALIWSIIIFRRWPVTLEEQTQ</sequence>
<organism>
    <name type="scientific">Escherichia coli (strain ATCC 8739 / DSM 1576 / NBRC 3972 / NCIMB 8545 / WDCM 00012 / Crooks)</name>
    <dbReference type="NCBI Taxonomy" id="481805"/>
    <lineage>
        <taxon>Bacteria</taxon>
        <taxon>Pseudomonadati</taxon>
        <taxon>Pseudomonadota</taxon>
        <taxon>Gammaproteobacteria</taxon>
        <taxon>Enterobacterales</taxon>
        <taxon>Enterobacteriaceae</taxon>
        <taxon>Escherichia</taxon>
    </lineage>
</organism>
<feature type="chain" id="PRO_1000081639" description="Probable sugar efflux transporter">
    <location>
        <begin position="1"/>
        <end position="396"/>
    </location>
</feature>
<feature type="transmembrane region" description="Helical" evidence="1">
    <location>
        <begin position="15"/>
        <end position="35"/>
    </location>
</feature>
<feature type="transmembrane region" description="Helical" evidence="1">
    <location>
        <begin position="50"/>
        <end position="70"/>
    </location>
</feature>
<feature type="transmembrane region" description="Helical" evidence="1">
    <location>
        <begin position="81"/>
        <end position="101"/>
    </location>
</feature>
<feature type="transmembrane region" description="Helical" evidence="1">
    <location>
        <begin position="103"/>
        <end position="123"/>
    </location>
</feature>
<feature type="transmembrane region" description="Helical" evidence="1">
    <location>
        <begin position="136"/>
        <end position="156"/>
    </location>
</feature>
<feature type="transmembrane region" description="Helical" evidence="1">
    <location>
        <begin position="170"/>
        <end position="190"/>
    </location>
</feature>
<feature type="transmembrane region" description="Helical" evidence="1">
    <location>
        <begin position="209"/>
        <end position="229"/>
    </location>
</feature>
<feature type="transmembrane region" description="Helical" evidence="1">
    <location>
        <begin position="246"/>
        <end position="266"/>
    </location>
</feature>
<feature type="transmembrane region" description="Helical" evidence="1">
    <location>
        <begin position="275"/>
        <end position="295"/>
    </location>
</feature>
<feature type="transmembrane region" description="Helical" evidence="1">
    <location>
        <begin position="299"/>
        <end position="319"/>
    </location>
</feature>
<feature type="transmembrane region" description="Helical" evidence="1">
    <location>
        <begin position="333"/>
        <end position="353"/>
    </location>
</feature>
<feature type="transmembrane region" description="Helical" evidence="1">
    <location>
        <begin position="364"/>
        <end position="384"/>
    </location>
</feature>
<proteinExistence type="inferred from homology"/>